<dbReference type="EMBL" id="CP000703">
    <property type="protein sequence ID" value="ABQ49436.1"/>
    <property type="molecule type" value="Genomic_DNA"/>
</dbReference>
<dbReference type="RefSeq" id="WP_001274017.1">
    <property type="nucleotide sequence ID" value="NC_009487.1"/>
</dbReference>
<dbReference type="SMR" id="A5ITB3"/>
<dbReference type="GeneID" id="66839775"/>
<dbReference type="KEGG" id="saj:SaurJH9_1643"/>
<dbReference type="HOGENOM" id="CLU_160655_1_1_9"/>
<dbReference type="GO" id="GO:0005829">
    <property type="term" value="C:cytosol"/>
    <property type="evidence" value="ECO:0007669"/>
    <property type="project" value="TreeGrafter"/>
</dbReference>
<dbReference type="GO" id="GO:0015935">
    <property type="term" value="C:small ribosomal subunit"/>
    <property type="evidence" value="ECO:0007669"/>
    <property type="project" value="TreeGrafter"/>
</dbReference>
<dbReference type="GO" id="GO:0070181">
    <property type="term" value="F:small ribosomal subunit rRNA binding"/>
    <property type="evidence" value="ECO:0007669"/>
    <property type="project" value="TreeGrafter"/>
</dbReference>
<dbReference type="GO" id="GO:0003735">
    <property type="term" value="F:structural constituent of ribosome"/>
    <property type="evidence" value="ECO:0007669"/>
    <property type="project" value="InterPro"/>
</dbReference>
<dbReference type="GO" id="GO:0006412">
    <property type="term" value="P:translation"/>
    <property type="evidence" value="ECO:0007669"/>
    <property type="project" value="UniProtKB-UniRule"/>
</dbReference>
<dbReference type="Gene3D" id="1.20.58.110">
    <property type="entry name" value="Ribosomal protein S20"/>
    <property type="match status" value="1"/>
</dbReference>
<dbReference type="HAMAP" id="MF_00500">
    <property type="entry name" value="Ribosomal_bS20"/>
    <property type="match status" value="1"/>
</dbReference>
<dbReference type="InterPro" id="IPR002583">
    <property type="entry name" value="Ribosomal_bS20"/>
</dbReference>
<dbReference type="InterPro" id="IPR036510">
    <property type="entry name" value="Ribosomal_bS20_sf"/>
</dbReference>
<dbReference type="NCBIfam" id="TIGR00029">
    <property type="entry name" value="S20"/>
    <property type="match status" value="1"/>
</dbReference>
<dbReference type="PANTHER" id="PTHR33398">
    <property type="entry name" value="30S RIBOSOMAL PROTEIN S20"/>
    <property type="match status" value="1"/>
</dbReference>
<dbReference type="PANTHER" id="PTHR33398:SF1">
    <property type="entry name" value="SMALL RIBOSOMAL SUBUNIT PROTEIN BS20C"/>
    <property type="match status" value="1"/>
</dbReference>
<dbReference type="Pfam" id="PF01649">
    <property type="entry name" value="Ribosomal_S20p"/>
    <property type="match status" value="1"/>
</dbReference>
<dbReference type="SUPFAM" id="SSF46992">
    <property type="entry name" value="Ribosomal protein S20"/>
    <property type="match status" value="1"/>
</dbReference>
<accession>A5ITB3</accession>
<feature type="chain" id="PRO_1000126517" description="Small ribosomal subunit protein bS20">
    <location>
        <begin position="1"/>
        <end position="83"/>
    </location>
</feature>
<evidence type="ECO:0000255" key="1">
    <source>
        <dbReference type="HAMAP-Rule" id="MF_00500"/>
    </source>
</evidence>
<evidence type="ECO:0000305" key="2"/>
<reference key="1">
    <citation type="submission" date="2007-05" db="EMBL/GenBank/DDBJ databases">
        <title>Complete sequence of chromosome of Staphylococcus aureus subsp. aureus JH9.</title>
        <authorList>
            <consortium name="US DOE Joint Genome Institute"/>
            <person name="Copeland A."/>
            <person name="Lucas S."/>
            <person name="Lapidus A."/>
            <person name="Barry K."/>
            <person name="Detter J.C."/>
            <person name="Glavina del Rio T."/>
            <person name="Hammon N."/>
            <person name="Israni S."/>
            <person name="Pitluck S."/>
            <person name="Chain P."/>
            <person name="Malfatti S."/>
            <person name="Shin M."/>
            <person name="Vergez L."/>
            <person name="Schmutz J."/>
            <person name="Larimer F."/>
            <person name="Land M."/>
            <person name="Hauser L."/>
            <person name="Kyrpides N."/>
            <person name="Kim E."/>
            <person name="Tomasz A."/>
            <person name="Richardson P."/>
        </authorList>
    </citation>
    <scope>NUCLEOTIDE SEQUENCE [LARGE SCALE GENOMIC DNA]</scope>
    <source>
        <strain>JH9</strain>
    </source>
</reference>
<name>RS20_STAA9</name>
<gene>
    <name evidence="1" type="primary">rpsT</name>
    <name type="ordered locus">SaurJH9_1643</name>
</gene>
<protein>
    <recommendedName>
        <fullName evidence="1">Small ribosomal subunit protein bS20</fullName>
    </recommendedName>
    <alternativeName>
        <fullName evidence="2">30S ribosomal protein S20</fullName>
    </alternativeName>
</protein>
<keyword id="KW-0687">Ribonucleoprotein</keyword>
<keyword id="KW-0689">Ribosomal protein</keyword>
<keyword id="KW-0694">RNA-binding</keyword>
<keyword id="KW-0699">rRNA-binding</keyword>
<comment type="function">
    <text evidence="1">Binds directly to 16S ribosomal RNA.</text>
</comment>
<comment type="similarity">
    <text evidence="1">Belongs to the bacterial ribosomal protein bS20 family.</text>
</comment>
<proteinExistence type="inferred from homology"/>
<sequence length="83" mass="9021">MANIKSAIKRVKTTEKAEARNISQKSAMRTAVKNAKTAVSNNADNKNELVSLAVKLVDKAAQSNLIHSNKADRIKSQLMTANK</sequence>
<organism>
    <name type="scientific">Staphylococcus aureus (strain JH9)</name>
    <dbReference type="NCBI Taxonomy" id="359786"/>
    <lineage>
        <taxon>Bacteria</taxon>
        <taxon>Bacillati</taxon>
        <taxon>Bacillota</taxon>
        <taxon>Bacilli</taxon>
        <taxon>Bacillales</taxon>
        <taxon>Staphylococcaceae</taxon>
        <taxon>Staphylococcus</taxon>
    </lineage>
</organism>